<name>PROP_STAAM</name>
<protein>
    <recommendedName>
        <fullName>Putative proline/betaine transporter</fullName>
    </recommendedName>
</protein>
<organism>
    <name type="scientific">Staphylococcus aureus (strain Mu50 / ATCC 700699)</name>
    <dbReference type="NCBI Taxonomy" id="158878"/>
    <lineage>
        <taxon>Bacteria</taxon>
        <taxon>Bacillati</taxon>
        <taxon>Bacillota</taxon>
        <taxon>Bacilli</taxon>
        <taxon>Bacillales</taxon>
        <taxon>Staphylococcaceae</taxon>
        <taxon>Staphylococcus</taxon>
    </lineage>
</organism>
<gene>
    <name type="primary">proP</name>
    <name type="ordered locus">SAV0573</name>
</gene>
<keyword id="KW-1003">Cell membrane</keyword>
<keyword id="KW-0472">Membrane</keyword>
<keyword id="KW-0769">Symport</keyword>
<keyword id="KW-0812">Transmembrane</keyword>
<keyword id="KW-1133">Transmembrane helix</keyword>
<keyword id="KW-0813">Transport</keyword>
<comment type="function">
    <text evidence="1">May be a proton symporter involved in the uptake of osmolytes such as proline and glycine betaine.</text>
</comment>
<comment type="subcellular location">
    <subcellularLocation>
        <location evidence="3">Cell membrane</location>
        <topology evidence="3">Multi-pass membrane protein</topology>
    </subcellularLocation>
</comment>
<comment type="similarity">
    <text evidence="3">Belongs to the major facilitator superfamily. Metabolite:H+ Symporter (MHS) family (TC 2.A.1.6) family.</text>
</comment>
<feature type="chain" id="PRO_0000050328" description="Putative proline/betaine transporter">
    <location>
        <begin position="1"/>
        <end position="466"/>
    </location>
</feature>
<feature type="transmembrane region" description="Helical" evidence="2">
    <location>
        <begin position="20"/>
        <end position="42"/>
    </location>
</feature>
<feature type="transmembrane region" description="Helical" evidence="2">
    <location>
        <begin position="63"/>
        <end position="83"/>
    </location>
</feature>
<feature type="transmembrane region" description="Helical" evidence="2">
    <location>
        <begin position="91"/>
        <end position="111"/>
    </location>
</feature>
<feature type="transmembrane region" description="Helical" evidence="2">
    <location>
        <begin position="116"/>
        <end position="136"/>
    </location>
</feature>
<feature type="transmembrane region" description="Helical" evidence="2">
    <location>
        <begin position="164"/>
        <end position="184"/>
    </location>
</feature>
<feature type="transmembrane region" description="Helical" evidence="2">
    <location>
        <begin position="191"/>
        <end position="211"/>
    </location>
</feature>
<feature type="transmembrane region" description="Helical" evidence="2">
    <location>
        <begin position="247"/>
        <end position="267"/>
    </location>
</feature>
<feature type="transmembrane region" description="Helical" evidence="2">
    <location>
        <begin position="285"/>
        <end position="305"/>
    </location>
</feature>
<feature type="transmembrane region" description="Helical" evidence="2">
    <location>
        <begin position="313"/>
        <end position="332"/>
    </location>
</feature>
<feature type="transmembrane region" description="Helical" evidence="2">
    <location>
        <begin position="337"/>
        <end position="354"/>
    </location>
</feature>
<feature type="transmembrane region" description="Helical" evidence="2">
    <location>
        <begin position="377"/>
        <end position="397"/>
    </location>
</feature>
<feature type="transmembrane region" description="Helical" evidence="2">
    <location>
        <begin position="405"/>
        <end position="425"/>
    </location>
</feature>
<sequence length="466" mass="51658">MDFNKENINMVDAKKAKKTVVATGIGNAMEWFDFGVYAYTTAYIGANFFSPVENADIRQMLTFAALAIAFLLRPIGGVVFGIIGDKYGRKVVLTSTIILMAFSTLTIGLLPSYDQIGLWAPILLLLARVLQGFSTGGEYAGAMTYVAESSPDKRRNSLGSGLEIGTLSGYIAASIMIAVLTFFLTDEQMASFGWRIPFLLGLFLGLFGLYLRRKLEESPVFENDVATQPERDNINFLQIIRFYYKDIFVCFVAVVFFNVTNYMVTAYLPTYLEQVIKLDATTTSVLITCVMAIMIPLALMFGKLADKIGEKKVFLIGTGGLTLFSIIAFMLLHSQSFVVIVIGIFILGFFLSTYEATMPGSLPTMFYSHIRYRTLSVTFNISVSIFGGTTPLVATWLVTKTGDPLAPAYYLTAISVIGFLVITFLHLSTAGKSLKGSYPNVDNEQDRAYYAEHPKEALWWVKERKN</sequence>
<accession>Q99W36</accession>
<proteinExistence type="inferred from homology"/>
<reference key="1">
    <citation type="journal article" date="2001" name="Lancet">
        <title>Whole genome sequencing of meticillin-resistant Staphylococcus aureus.</title>
        <authorList>
            <person name="Kuroda M."/>
            <person name="Ohta T."/>
            <person name="Uchiyama I."/>
            <person name="Baba T."/>
            <person name="Yuzawa H."/>
            <person name="Kobayashi I."/>
            <person name="Cui L."/>
            <person name="Oguchi A."/>
            <person name="Aoki K."/>
            <person name="Nagai Y."/>
            <person name="Lian J.-Q."/>
            <person name="Ito T."/>
            <person name="Kanamori M."/>
            <person name="Matsumaru H."/>
            <person name="Maruyama A."/>
            <person name="Murakami H."/>
            <person name="Hosoyama A."/>
            <person name="Mizutani-Ui Y."/>
            <person name="Takahashi N.K."/>
            <person name="Sawano T."/>
            <person name="Inoue R."/>
            <person name="Kaito C."/>
            <person name="Sekimizu K."/>
            <person name="Hirakawa H."/>
            <person name="Kuhara S."/>
            <person name="Goto S."/>
            <person name="Yabuzaki J."/>
            <person name="Kanehisa M."/>
            <person name="Yamashita A."/>
            <person name="Oshima K."/>
            <person name="Furuya K."/>
            <person name="Yoshino C."/>
            <person name="Shiba T."/>
            <person name="Hattori M."/>
            <person name="Ogasawara N."/>
            <person name="Hayashi H."/>
            <person name="Hiramatsu K."/>
        </authorList>
    </citation>
    <scope>NUCLEOTIDE SEQUENCE [LARGE SCALE GENOMIC DNA]</scope>
    <source>
        <strain>Mu50 / ATCC 700699</strain>
    </source>
</reference>
<dbReference type="EMBL" id="BA000017">
    <property type="protein sequence ID" value="BAB56735.1"/>
    <property type="molecule type" value="Genomic_DNA"/>
</dbReference>
<dbReference type="RefSeq" id="WP_000347061.1">
    <property type="nucleotide sequence ID" value="NC_002758.2"/>
</dbReference>
<dbReference type="SMR" id="Q99W36"/>
<dbReference type="KEGG" id="sav:SAV0573"/>
<dbReference type="HOGENOM" id="CLU_001265_39_5_9"/>
<dbReference type="PhylomeDB" id="Q99W36"/>
<dbReference type="Proteomes" id="UP000002481">
    <property type="component" value="Chromosome"/>
</dbReference>
<dbReference type="GO" id="GO:0005886">
    <property type="term" value="C:plasma membrane"/>
    <property type="evidence" value="ECO:0007669"/>
    <property type="project" value="UniProtKB-SubCell"/>
</dbReference>
<dbReference type="GO" id="GO:0015293">
    <property type="term" value="F:symporter activity"/>
    <property type="evidence" value="ECO:0007669"/>
    <property type="project" value="UniProtKB-KW"/>
</dbReference>
<dbReference type="CDD" id="cd17366">
    <property type="entry name" value="MFS_ProP"/>
    <property type="match status" value="1"/>
</dbReference>
<dbReference type="FunFam" id="1.20.1250.20:FF:000001">
    <property type="entry name" value="Dicarboxylate MFS transporter"/>
    <property type="match status" value="1"/>
</dbReference>
<dbReference type="FunFam" id="1.20.1250.20:FF:000236">
    <property type="entry name" value="Proline/betaine transporter, putative"/>
    <property type="match status" value="1"/>
</dbReference>
<dbReference type="Gene3D" id="1.20.1250.20">
    <property type="entry name" value="MFS general substrate transporter like domains"/>
    <property type="match status" value="2"/>
</dbReference>
<dbReference type="InterPro" id="IPR051084">
    <property type="entry name" value="H+-coupled_symporters"/>
</dbReference>
<dbReference type="InterPro" id="IPR011701">
    <property type="entry name" value="MFS"/>
</dbReference>
<dbReference type="InterPro" id="IPR020846">
    <property type="entry name" value="MFS_dom"/>
</dbReference>
<dbReference type="InterPro" id="IPR036259">
    <property type="entry name" value="MFS_trans_sf"/>
</dbReference>
<dbReference type="InterPro" id="IPR005829">
    <property type="entry name" value="Sugar_transporter_CS"/>
</dbReference>
<dbReference type="PANTHER" id="PTHR43528">
    <property type="entry name" value="ALPHA-KETOGLUTARATE PERMEASE"/>
    <property type="match status" value="1"/>
</dbReference>
<dbReference type="PANTHER" id="PTHR43528:SF1">
    <property type="entry name" value="ALPHA-KETOGLUTARATE PERMEASE"/>
    <property type="match status" value="1"/>
</dbReference>
<dbReference type="Pfam" id="PF07690">
    <property type="entry name" value="MFS_1"/>
    <property type="match status" value="1"/>
</dbReference>
<dbReference type="SUPFAM" id="SSF103473">
    <property type="entry name" value="MFS general substrate transporter"/>
    <property type="match status" value="1"/>
</dbReference>
<dbReference type="PROSITE" id="PS50850">
    <property type="entry name" value="MFS"/>
    <property type="match status" value="1"/>
</dbReference>
<dbReference type="PROSITE" id="PS00217">
    <property type="entry name" value="SUGAR_TRANSPORT_2"/>
    <property type="match status" value="1"/>
</dbReference>
<evidence type="ECO:0000250" key="1"/>
<evidence type="ECO:0000255" key="2"/>
<evidence type="ECO:0000305" key="3"/>